<name>RR12_CHLAT</name>
<reference key="1">
    <citation type="journal article" date="2007" name="BMC Biol.">
        <title>A clade uniting the green algae Mesostigma viride and Chlorokybus atmophyticus represents the deepest branch of the Streptophyta in chloroplast genome-based phylogenies.</title>
        <authorList>
            <person name="Lemieux C."/>
            <person name="Otis C."/>
            <person name="Turmel M."/>
        </authorList>
    </citation>
    <scope>NUCLEOTIDE SEQUENCE [LARGE SCALE GENOMIC DNA]</scope>
    <source>
        <strain>SAG 48.80</strain>
    </source>
</reference>
<gene>
    <name type="primary">rps12</name>
</gene>
<feature type="chain" id="PRO_0000296065" description="Small ribosomal subunit protein uS12c">
    <location>
        <begin position="1"/>
        <end position="123"/>
    </location>
</feature>
<dbReference type="EMBL" id="DQ422812">
    <property type="protein sequence ID" value="ABD62244.2"/>
    <property type="molecule type" value="Genomic_DNA"/>
</dbReference>
<dbReference type="RefSeq" id="YP_001019137.1">
    <property type="nucleotide sequence ID" value="NC_008822.1"/>
</dbReference>
<dbReference type="SMR" id="Q19V72"/>
<dbReference type="GeneID" id="4783178"/>
<dbReference type="GO" id="GO:0009507">
    <property type="term" value="C:chloroplast"/>
    <property type="evidence" value="ECO:0007669"/>
    <property type="project" value="UniProtKB-SubCell"/>
</dbReference>
<dbReference type="GO" id="GO:0015935">
    <property type="term" value="C:small ribosomal subunit"/>
    <property type="evidence" value="ECO:0007669"/>
    <property type="project" value="InterPro"/>
</dbReference>
<dbReference type="GO" id="GO:0019843">
    <property type="term" value="F:rRNA binding"/>
    <property type="evidence" value="ECO:0007669"/>
    <property type="project" value="UniProtKB-UniRule"/>
</dbReference>
<dbReference type="GO" id="GO:0003735">
    <property type="term" value="F:structural constituent of ribosome"/>
    <property type="evidence" value="ECO:0007669"/>
    <property type="project" value="InterPro"/>
</dbReference>
<dbReference type="GO" id="GO:0006412">
    <property type="term" value="P:translation"/>
    <property type="evidence" value="ECO:0007669"/>
    <property type="project" value="UniProtKB-UniRule"/>
</dbReference>
<dbReference type="CDD" id="cd03368">
    <property type="entry name" value="Ribosomal_S12"/>
    <property type="match status" value="1"/>
</dbReference>
<dbReference type="FunFam" id="2.40.50.140:FF:000001">
    <property type="entry name" value="30S ribosomal protein S12"/>
    <property type="match status" value="1"/>
</dbReference>
<dbReference type="Gene3D" id="2.40.50.140">
    <property type="entry name" value="Nucleic acid-binding proteins"/>
    <property type="match status" value="1"/>
</dbReference>
<dbReference type="HAMAP" id="MF_00403_B">
    <property type="entry name" value="Ribosomal_uS12_B"/>
    <property type="match status" value="1"/>
</dbReference>
<dbReference type="InterPro" id="IPR012340">
    <property type="entry name" value="NA-bd_OB-fold"/>
</dbReference>
<dbReference type="InterPro" id="IPR006032">
    <property type="entry name" value="Ribosomal_uS12"/>
</dbReference>
<dbReference type="InterPro" id="IPR005679">
    <property type="entry name" value="Ribosomal_uS12_bac"/>
</dbReference>
<dbReference type="NCBIfam" id="TIGR00981">
    <property type="entry name" value="rpsL_bact"/>
    <property type="match status" value="1"/>
</dbReference>
<dbReference type="PANTHER" id="PTHR11652">
    <property type="entry name" value="30S RIBOSOMAL PROTEIN S12 FAMILY MEMBER"/>
    <property type="match status" value="1"/>
</dbReference>
<dbReference type="Pfam" id="PF00164">
    <property type="entry name" value="Ribosom_S12_S23"/>
    <property type="match status" value="1"/>
</dbReference>
<dbReference type="PIRSF" id="PIRSF002133">
    <property type="entry name" value="Ribosomal_S12/S23"/>
    <property type="match status" value="1"/>
</dbReference>
<dbReference type="PRINTS" id="PR01034">
    <property type="entry name" value="RIBOSOMALS12"/>
</dbReference>
<dbReference type="SUPFAM" id="SSF50249">
    <property type="entry name" value="Nucleic acid-binding proteins"/>
    <property type="match status" value="1"/>
</dbReference>
<dbReference type="PROSITE" id="PS00055">
    <property type="entry name" value="RIBOSOMAL_S12"/>
    <property type="match status" value="1"/>
</dbReference>
<geneLocation type="chloroplast"/>
<evidence type="ECO:0000250" key="1"/>
<evidence type="ECO:0000305" key="2"/>
<organism>
    <name type="scientific">Chlorokybus atmophyticus</name>
    <name type="common">Soil alga</name>
    <dbReference type="NCBI Taxonomy" id="3144"/>
    <lineage>
        <taxon>Eukaryota</taxon>
        <taxon>Viridiplantae</taxon>
        <taxon>Streptophyta</taxon>
        <taxon>Chlorokybophyceae</taxon>
        <taxon>Chlorokybales</taxon>
        <taxon>Chlorokybaceae</taxon>
        <taxon>Chlorokybus</taxon>
    </lineage>
</organism>
<comment type="function">
    <text evidence="1">With S4 and S5 plays an important role in translational accuracy. Located at the interface of the 30S and 50S subunits (By similarity).</text>
</comment>
<comment type="subunit">
    <text evidence="1">Part of the 30S ribosomal subunit.</text>
</comment>
<comment type="subcellular location">
    <subcellularLocation>
        <location>Plastid</location>
        <location>Chloroplast</location>
    </subcellularLocation>
</comment>
<comment type="similarity">
    <text evidence="2">Belongs to the universal ribosomal protein uS12 family.</text>
</comment>
<protein>
    <recommendedName>
        <fullName evidence="2">Small ribosomal subunit protein uS12c</fullName>
    </recommendedName>
    <alternativeName>
        <fullName>30S ribosomal protein S12, chloroplastic</fullName>
    </alternativeName>
</protein>
<sequence>MPTIQQLIRSQRKKVEKKTKSPALRGCPQRRGVCTRVYTTTPKKPNSALRKVARVRLTSGFEVTAYIPGIGHNLQEHSVVLVRGGRVKDLPGVRYHIVRGILDTAGVKDRSQGRSKYGVKRPK</sequence>
<proteinExistence type="inferred from homology"/>
<accession>Q19V72</accession>
<keyword id="KW-0150">Chloroplast</keyword>
<keyword id="KW-0934">Plastid</keyword>
<keyword id="KW-0687">Ribonucleoprotein</keyword>
<keyword id="KW-0689">Ribosomal protein</keyword>
<keyword id="KW-0694">RNA-binding</keyword>
<keyword id="KW-0699">rRNA-binding</keyword>